<keyword id="KW-0046">Antibiotic resistance</keyword>
<keyword id="KW-0050">Antiport</keyword>
<keyword id="KW-0997">Cell inner membrane</keyword>
<keyword id="KW-1003">Cell membrane</keyword>
<keyword id="KW-0406">Ion transport</keyword>
<keyword id="KW-0472">Membrane</keyword>
<keyword id="KW-0630">Potassium</keyword>
<keyword id="KW-0633">Potassium transport</keyword>
<keyword id="KW-1185">Reference proteome</keyword>
<keyword id="KW-0915">Sodium</keyword>
<keyword id="KW-0739">Sodium transport</keyword>
<keyword id="KW-0812">Transmembrane</keyword>
<keyword id="KW-1133">Transmembrane helix</keyword>
<keyword id="KW-0813">Transport</keyword>
<feature type="chain" id="PRO_0000084839" description="Multidrug resistance protein MdtM">
    <location>
        <begin position="1"/>
        <end position="410"/>
    </location>
</feature>
<feature type="topological domain" description="Cytoplasmic" evidence="14">
    <location>
        <begin position="1"/>
        <end position="11"/>
    </location>
</feature>
<feature type="transmembrane region" description="Helical" evidence="1">
    <location>
        <begin position="12"/>
        <end position="32"/>
    </location>
</feature>
<feature type="topological domain" description="Periplasmic" evidence="14">
    <location>
        <begin position="33"/>
        <end position="48"/>
    </location>
</feature>
<feature type="transmembrane region" description="Helical" evidence="1">
    <location>
        <begin position="49"/>
        <end position="69"/>
    </location>
</feature>
<feature type="topological domain" description="Cytoplasmic" evidence="14">
    <location>
        <begin position="70"/>
        <end position="78"/>
    </location>
</feature>
<feature type="transmembrane region" description="Helical" evidence="1">
    <location>
        <begin position="79"/>
        <end position="99"/>
    </location>
</feature>
<feature type="topological domain" description="Periplasmic" evidence="14">
    <location>
        <begin position="100"/>
        <end position="103"/>
    </location>
</feature>
<feature type="transmembrane region" description="Helical" evidence="1">
    <location>
        <begin position="104"/>
        <end position="124"/>
    </location>
</feature>
<feature type="topological domain" description="Cytoplasmic" evidence="14">
    <location>
        <begin position="125"/>
        <end position="140"/>
    </location>
</feature>
<feature type="transmembrane region" description="Helical" evidence="1">
    <location>
        <begin position="141"/>
        <end position="161"/>
    </location>
</feature>
<feature type="topological domain" description="Periplasmic" evidence="14">
    <location>
        <begin position="162"/>
        <end position="167"/>
    </location>
</feature>
<feature type="transmembrane region" description="Helical" evidence="1">
    <location>
        <begin position="168"/>
        <end position="188"/>
    </location>
</feature>
<feature type="topological domain" description="Cytoplasmic" evidence="14">
    <location>
        <begin position="189"/>
        <end position="216"/>
    </location>
</feature>
<feature type="transmembrane region" description="Helical" evidence="1">
    <location>
        <begin position="217"/>
        <end position="237"/>
    </location>
</feature>
<feature type="topological domain" description="Periplasmic" evidence="14">
    <location>
        <begin position="238"/>
        <end position="251"/>
    </location>
</feature>
<feature type="transmembrane region" description="Helical" evidence="1">
    <location>
        <begin position="252"/>
        <end position="272"/>
    </location>
</feature>
<feature type="topological domain" description="Cytoplasmic" evidence="14">
    <location>
        <begin position="273"/>
        <end position="282"/>
    </location>
</feature>
<feature type="transmembrane region" description="Helical" evidence="1">
    <location>
        <begin position="283"/>
        <end position="303"/>
    </location>
</feature>
<feature type="topological domain" description="Periplasmic" evidence="14">
    <location>
        <begin position="304"/>
        <end position="307"/>
    </location>
</feature>
<feature type="transmembrane region" description="Helical" evidence="1">
    <location>
        <begin position="308"/>
        <end position="328"/>
    </location>
</feature>
<feature type="topological domain" description="Cytoplasmic" evidence="14">
    <location>
        <begin position="329"/>
        <end position="348"/>
    </location>
</feature>
<feature type="transmembrane region" description="Helical" evidence="1">
    <location>
        <begin position="349"/>
        <end position="369"/>
    </location>
</feature>
<feature type="topological domain" description="Periplasmic" evidence="14">
    <location>
        <begin position="370"/>
        <end position="373"/>
    </location>
</feature>
<feature type="transmembrane region" description="Helical" evidence="1">
    <location>
        <begin position="374"/>
        <end position="394"/>
    </location>
</feature>
<feature type="topological domain" description="Cytoplasmic" evidence="3">
    <location>
        <begin position="395"/>
        <end position="410"/>
    </location>
</feature>
<feature type="sequence variant" description="In strain: B.">
    <original>E</original>
    <variation>K</variation>
    <location>
        <position position="128"/>
    </location>
</feature>
<feature type="mutagenesis site" description="Lack of activity. Retains the ability to bind chloramphenicol, but cannot confer resistance to ethidium bromide and chloramphenicol. Cannot grow at pH 9.5 and 9.75." evidence="4 6 7">
    <original>D</original>
    <variation>A</variation>
    <location>
        <position position="22"/>
    </location>
</feature>
<feature type="mutagenesis site" description="Decreases resistance to ethidium bromide and chloramphenicol. Retains the ability to bind chloramphenicol." evidence="4">
    <original>R</original>
    <variation>K</variation>
    <location>
        <position position="108"/>
    </location>
</feature>
<comment type="function">
    <text evidence="2 4 5 6 7 9">Proton-dependent efflux pump (PubMed:22426385, PubMed:23221628, PubMed:23701827, PubMed:24684269). Confers resistance to a broad spectrum of chemically unrelated substrates (PubMed:11566977, PubMed:22426385, PubMed:23221628, PubMed:23701827, PubMed:24684269). Overexpression confers resistance to acriflavine, chloramphenicol, norfloxacin, ethidium bromide and tetraphenylphosphonium bromide (TPP) (PubMed:11566977, PubMed:22426385). Can also export a broad range of quaternary ammonium compounds (QACs) and contribute to the intrinsic resistance of E.coli to these antimicrobial compounds (PubMed:23221628). In addition to its role in multidrug resistance, MdtM likely plays a physiological role in alkaline pH homeostasis and in resistance to bile salts (PubMed:23701827, PubMed:24684269, PubMed:28962921). May function in alkaline pH homeostasis when millimolar concentrations of sodium or potassium are present in the growth medium (PubMed:23701827). When overexpressed, can confer a tolerance to alkaline pH values up to 9.75 (PubMed:23701827). Probably acts as a low-affinity antiporter that catalyzes the exchange of internal Na(+) and K(+) cations for extracellular protons to maintain a stable internal pH, acid relative to outside, during exposure to alkaline environments (PubMed:23701827). Can also catalyze Rb(+)/H(+) and Li(+)/H(+) antiport, but not Ca(2+)/H(+) exchange (PubMed:23701827). The exact stoichiometry of antiport is unknown (PubMed:23701827). Finally, it could contribute to bile salt resistance by catalyzing the transport of bile salts out of the cell cytoplasm (PubMed:24684269). Mediates a bile salt/H(+) exchange driven by the electrochemical gradient (PubMed:24684269). Binds to cholate and deoxycholate with micromolar affinity and catalyzes both cholate/H(+) and deoxycholate/H(+) exchange reactions (PubMed:24684269).</text>
</comment>
<comment type="catalytic activity">
    <reaction evidence="6">
        <text>Na(+)(in) + 2 H(+)(out) = Na(+)(out) + 2 H(+)(in)</text>
        <dbReference type="Rhea" id="RHEA:29251"/>
        <dbReference type="ChEBI" id="CHEBI:15378"/>
        <dbReference type="ChEBI" id="CHEBI:29101"/>
    </reaction>
</comment>
<comment type="catalytic activity">
    <reaction evidence="6">
        <text>K(+)(in) + H(+)(out) = K(+)(out) + H(+)(in)</text>
        <dbReference type="Rhea" id="RHEA:29467"/>
        <dbReference type="ChEBI" id="CHEBI:15378"/>
        <dbReference type="ChEBI" id="CHEBI:29103"/>
    </reaction>
</comment>
<comment type="activity regulation">
    <text evidence="4 6 7">Efflux is inhibited by the ionophore carbonyl cyanide 3-chlorophenylhydrazone (CCCP).</text>
</comment>
<comment type="biophysicochemical properties">
    <phDependence>
        <text evidence="6">Optimum pH is 9.0 for K(+)/H(+) exchange activity (PubMed:23701827). Optimum pH is 9.25 for Na(+)/H(+) exchange activity (PubMed:23701827).</text>
    </phDependence>
</comment>
<comment type="subunit">
    <text evidence="4 8">Monomer.</text>
</comment>
<comment type="subcellular location">
    <subcellularLocation>
        <location evidence="3 4 6 8">Cell inner membrane</location>
        <topology evidence="1">Multi-pass membrane protein</topology>
    </subcellularLocation>
</comment>
<comment type="disruption phenotype">
    <text evidence="4 6 7">Deletion mutant shows impaired growth in the presence of ethidium bromide and is clearly more susceptible to the effects of chloramphenicol (PubMed:22426385). Growth of the deletion mutant is inhibited above pH 9.25 (PubMed:23701827). Deletion of the gene results in a strain that is twofold more susceptible to cholate and fourfold more susceptible to deoxycholate (PubMed:24684269).</text>
</comment>
<comment type="miscellaneous">
    <text evidence="4">Overexpression of MdtM can compensate for loss of MdfA.</text>
</comment>
<comment type="similarity">
    <text evidence="14">Belongs to the major facilitator superfamily.</text>
</comment>
<protein>
    <recommendedName>
        <fullName evidence="11">Multidrug resistance protein MdtM</fullName>
    </recommendedName>
    <alternativeName>
        <fullName evidence="12 13">Multidrug resistance transporter MdtM</fullName>
        <shortName evidence="10">MDR transporter MdtM</shortName>
        <shortName evidence="10">Multidrug transporter MdtM</shortName>
    </alternativeName>
</protein>
<gene>
    <name evidence="10" type="primary">mdtM</name>
    <name type="synonym">yjiO</name>
    <name type="ordered locus">b4337</name>
    <name type="ordered locus">JW4300</name>
</gene>
<proteinExistence type="evidence at protein level"/>
<evidence type="ECO:0000255" key="1"/>
<evidence type="ECO:0000269" key="2">
    <source>
    </source>
</evidence>
<evidence type="ECO:0000269" key="3">
    <source>
    </source>
</evidence>
<evidence type="ECO:0000269" key="4">
    <source>
    </source>
</evidence>
<evidence type="ECO:0000269" key="5">
    <source>
    </source>
</evidence>
<evidence type="ECO:0000269" key="6">
    <source>
    </source>
</evidence>
<evidence type="ECO:0000269" key="7">
    <source>
    </source>
</evidence>
<evidence type="ECO:0000269" key="8">
    <source>
    </source>
</evidence>
<evidence type="ECO:0000269" key="9">
    <source>
    </source>
</evidence>
<evidence type="ECO:0000303" key="10">
    <source>
    </source>
</evidence>
<evidence type="ECO:0000303" key="11">
    <source>
    </source>
</evidence>
<evidence type="ECO:0000303" key="12">
    <source>
    </source>
</evidence>
<evidence type="ECO:0000303" key="13">
    <source>
    </source>
</evidence>
<evidence type="ECO:0000305" key="14"/>
<dbReference type="EMBL" id="AY283773">
    <property type="protein sequence ID" value="AAP43530.1"/>
    <property type="molecule type" value="Genomic_DNA"/>
</dbReference>
<dbReference type="EMBL" id="U14003">
    <property type="protein sequence ID" value="AAA97233.1"/>
    <property type="molecule type" value="Genomic_DNA"/>
</dbReference>
<dbReference type="EMBL" id="U00096">
    <property type="protein sequence ID" value="AAC77293.1"/>
    <property type="molecule type" value="Genomic_DNA"/>
</dbReference>
<dbReference type="EMBL" id="AP009048">
    <property type="protein sequence ID" value="BAE78330.1"/>
    <property type="molecule type" value="Genomic_DNA"/>
</dbReference>
<dbReference type="PIR" id="S56562">
    <property type="entry name" value="S56562"/>
</dbReference>
<dbReference type="RefSeq" id="NP_418757.1">
    <property type="nucleotide sequence ID" value="NC_000913.3"/>
</dbReference>
<dbReference type="RefSeq" id="WP_001137036.1">
    <property type="nucleotide sequence ID" value="NZ_LN832404.1"/>
</dbReference>
<dbReference type="SMR" id="P39386"/>
<dbReference type="BioGRID" id="4261450">
    <property type="interactions" value="183"/>
</dbReference>
<dbReference type="DIP" id="DIP-12641N"/>
<dbReference type="FunCoup" id="P39386">
    <property type="interactions" value="297"/>
</dbReference>
<dbReference type="STRING" id="511145.b4337"/>
<dbReference type="CARD" id="ARO:3001214">
    <property type="molecule name" value="mdtM"/>
    <property type="mechanism identifier" value="ARO:0010000"/>
    <property type="mechanism name" value="antibiotic efflux"/>
</dbReference>
<dbReference type="TCDB" id="2.A.1.2.52">
    <property type="family name" value="the major facilitator superfamily (mfs)"/>
</dbReference>
<dbReference type="PaxDb" id="511145-b4337"/>
<dbReference type="EnsemblBacteria" id="AAC77293">
    <property type="protein sequence ID" value="AAC77293"/>
    <property type="gene ID" value="b4337"/>
</dbReference>
<dbReference type="GeneID" id="948861"/>
<dbReference type="KEGG" id="ecj:JW4300"/>
<dbReference type="KEGG" id="eco:b4337"/>
<dbReference type="KEGG" id="ecoc:C3026_23445"/>
<dbReference type="PATRIC" id="fig|1411691.4.peg.2350"/>
<dbReference type="EchoBASE" id="EB2464"/>
<dbReference type="eggNOG" id="COG2814">
    <property type="taxonomic scope" value="Bacteria"/>
</dbReference>
<dbReference type="HOGENOM" id="CLU_001265_47_2_6"/>
<dbReference type="InParanoid" id="P39386"/>
<dbReference type="OMA" id="YIPLMSW"/>
<dbReference type="OrthoDB" id="9814303at2"/>
<dbReference type="PhylomeDB" id="P39386"/>
<dbReference type="BioCyc" id="EcoCyc:YJIO-MONOMER"/>
<dbReference type="BioCyc" id="MetaCyc:YJIO-MONOMER"/>
<dbReference type="PRO" id="PR:P39386"/>
<dbReference type="Proteomes" id="UP000000625">
    <property type="component" value="Chromosome"/>
</dbReference>
<dbReference type="GO" id="GO:0005886">
    <property type="term" value="C:plasma membrane"/>
    <property type="evidence" value="ECO:0000314"/>
    <property type="project" value="EcoCyc"/>
</dbReference>
<dbReference type="GO" id="GO:0015125">
    <property type="term" value="F:bile acid transmembrane transporter activity"/>
    <property type="evidence" value="ECO:0000314"/>
    <property type="project" value="EcoCyc"/>
</dbReference>
<dbReference type="GO" id="GO:0015386">
    <property type="term" value="F:potassium:proton antiporter activity"/>
    <property type="evidence" value="ECO:0000314"/>
    <property type="project" value="EcoCyc"/>
</dbReference>
<dbReference type="GO" id="GO:0015385">
    <property type="term" value="F:sodium:proton antiporter activity"/>
    <property type="evidence" value="ECO:0000314"/>
    <property type="project" value="EcoCyc"/>
</dbReference>
<dbReference type="GO" id="GO:0015721">
    <property type="term" value="P:bile acid and bile salt transport"/>
    <property type="evidence" value="ECO:0000314"/>
    <property type="project" value="EcoCyc"/>
</dbReference>
<dbReference type="GO" id="GO:0097623">
    <property type="term" value="P:potassium ion export across plasma membrane"/>
    <property type="evidence" value="ECO:0000314"/>
    <property type="project" value="EcoCyc"/>
</dbReference>
<dbReference type="GO" id="GO:0030641">
    <property type="term" value="P:regulation of cellular pH"/>
    <property type="evidence" value="ECO:0000315"/>
    <property type="project" value="EcoCyc"/>
</dbReference>
<dbReference type="GO" id="GO:0046677">
    <property type="term" value="P:response to antibiotic"/>
    <property type="evidence" value="ECO:0000315"/>
    <property type="project" value="EcoCyc"/>
</dbReference>
<dbReference type="GO" id="GO:0036376">
    <property type="term" value="P:sodium ion export across plasma membrane"/>
    <property type="evidence" value="ECO:0000314"/>
    <property type="project" value="EcoCyc"/>
</dbReference>
<dbReference type="GO" id="GO:1990961">
    <property type="term" value="P:xenobiotic detoxification by transmembrane export across the plasma membrane"/>
    <property type="evidence" value="ECO:0000315"/>
    <property type="project" value="EcoCyc"/>
</dbReference>
<dbReference type="CDD" id="cd17320">
    <property type="entry name" value="MFS_MdfA_MDR_like"/>
    <property type="match status" value="1"/>
</dbReference>
<dbReference type="FunFam" id="1.20.1720.10:FF:000010">
    <property type="entry name" value="Multidrug resistance protein MdtM"/>
    <property type="match status" value="1"/>
</dbReference>
<dbReference type="Gene3D" id="1.20.1720.10">
    <property type="entry name" value="Multidrug resistance protein D"/>
    <property type="match status" value="1"/>
</dbReference>
<dbReference type="InterPro" id="IPR011701">
    <property type="entry name" value="MFS"/>
</dbReference>
<dbReference type="InterPro" id="IPR020846">
    <property type="entry name" value="MFS_dom"/>
</dbReference>
<dbReference type="InterPro" id="IPR036259">
    <property type="entry name" value="MFS_trans_sf"/>
</dbReference>
<dbReference type="InterPro" id="IPR005829">
    <property type="entry name" value="Sugar_transporter_CS"/>
</dbReference>
<dbReference type="NCBIfam" id="NF011932">
    <property type="entry name" value="PRK15403.1"/>
    <property type="match status" value="1"/>
</dbReference>
<dbReference type="PANTHER" id="PTHR23502">
    <property type="entry name" value="MAJOR FACILITATOR SUPERFAMILY"/>
    <property type="match status" value="1"/>
</dbReference>
<dbReference type="PANTHER" id="PTHR23502:SF10">
    <property type="entry name" value="MULTIDRUG RESISTANCE PROTEIN MDTM"/>
    <property type="match status" value="1"/>
</dbReference>
<dbReference type="Pfam" id="PF07690">
    <property type="entry name" value="MFS_1"/>
    <property type="match status" value="1"/>
</dbReference>
<dbReference type="SUPFAM" id="SSF103473">
    <property type="entry name" value="MFS general substrate transporter"/>
    <property type="match status" value="1"/>
</dbReference>
<dbReference type="PROSITE" id="PS50850">
    <property type="entry name" value="MFS"/>
    <property type="match status" value="1"/>
</dbReference>
<name>MDTM_ECOLI</name>
<organism>
    <name type="scientific">Escherichia coli (strain K12)</name>
    <dbReference type="NCBI Taxonomy" id="83333"/>
    <lineage>
        <taxon>Bacteria</taxon>
        <taxon>Pseudomonadati</taxon>
        <taxon>Pseudomonadota</taxon>
        <taxon>Gammaproteobacteria</taxon>
        <taxon>Enterobacterales</taxon>
        <taxon>Enterobacteriaceae</taxon>
        <taxon>Escherichia</taxon>
    </lineage>
</organism>
<sequence length="410" mass="44688">MPRFFTRHAATLFFPMALILYDFAAYLSTDLIQPGIINVVRDFNADVSLAPAAVSLYLAGGMALQWLLGPLSDRIGRRPVLITGALIFTLACAATMFTTSMTQFLIARAIQGTSICFIATVGYVTVQEAFGQTKGIKLMAIITSIVLIAPIIGPLSGAALMHFMHWKVLFAIIAVMGFISFVGLLLAMPETVKRGAVPFSAKSVLRDFRNVFCNRLFLFGAATISLSYIPMMSWVAVSPVILIDAGSLTTSQFAWTQVPVFGAVIVANAIVARFVKDPTEPRFIWRAVPIQLVGLSLLIVGNLLSPHVWLWSVLGTSLYAFGIGLIFPTLFRFTLFSNKLPKGTVSASLNMVILMVMSVSVEIGRWLWFNGGRLPFHLLAVVAGVIVVFTLAGLLNRVRQHQAAELVEEQ</sequence>
<accession>P39386</accession>
<accession>Q2M5X6</accession>
<accession>Q7X4V2</accession>
<reference key="1">
    <citation type="submission" date="2003-04" db="EMBL/GenBank/DDBJ databases">
        <title>Nucleotide sequence of the YjiO gene of Escherichia coli B.</title>
        <authorList>
            <person name="Ramchandani J.H."/>
            <person name="Bhattacharjee S.K."/>
            <person name="Mahajan S.K."/>
        </authorList>
    </citation>
    <scope>NUCLEOTIDE SEQUENCE [GENOMIC DNA]</scope>
    <source>
        <strain>B</strain>
    </source>
</reference>
<reference key="2">
    <citation type="journal article" date="1995" name="Nucleic Acids Res.">
        <title>Analysis of the Escherichia coli genome VI: DNA sequence of the region from 92.8 through 100 minutes.</title>
        <authorList>
            <person name="Burland V.D."/>
            <person name="Plunkett G. III"/>
            <person name="Sofia H.J."/>
            <person name="Daniels D.L."/>
            <person name="Blattner F.R."/>
        </authorList>
    </citation>
    <scope>NUCLEOTIDE SEQUENCE [LARGE SCALE GENOMIC DNA]</scope>
    <source>
        <strain>K12 / MG1655 / ATCC 47076</strain>
    </source>
</reference>
<reference key="3">
    <citation type="journal article" date="1997" name="Science">
        <title>The complete genome sequence of Escherichia coli K-12.</title>
        <authorList>
            <person name="Blattner F.R."/>
            <person name="Plunkett G. III"/>
            <person name="Bloch C.A."/>
            <person name="Perna N.T."/>
            <person name="Burland V."/>
            <person name="Riley M."/>
            <person name="Collado-Vides J."/>
            <person name="Glasner J.D."/>
            <person name="Rode C.K."/>
            <person name="Mayhew G.F."/>
            <person name="Gregor J."/>
            <person name="Davis N.W."/>
            <person name="Kirkpatrick H.A."/>
            <person name="Goeden M.A."/>
            <person name="Rose D.J."/>
            <person name="Mau B."/>
            <person name="Shao Y."/>
        </authorList>
    </citation>
    <scope>NUCLEOTIDE SEQUENCE [LARGE SCALE GENOMIC DNA]</scope>
    <source>
        <strain>K12 / MG1655 / ATCC 47076</strain>
    </source>
</reference>
<reference key="4">
    <citation type="journal article" date="2006" name="Mol. Syst. Biol.">
        <title>Highly accurate genome sequences of Escherichia coli K-12 strains MG1655 and W3110.</title>
        <authorList>
            <person name="Hayashi K."/>
            <person name="Morooka N."/>
            <person name="Yamamoto Y."/>
            <person name="Fujita K."/>
            <person name="Isono K."/>
            <person name="Choi S."/>
            <person name="Ohtsubo E."/>
            <person name="Baba T."/>
            <person name="Wanner B.L."/>
            <person name="Mori H."/>
            <person name="Horiuchi T."/>
        </authorList>
    </citation>
    <scope>NUCLEOTIDE SEQUENCE [LARGE SCALE GENOMIC DNA]</scope>
    <source>
        <strain>K12 / W3110 / ATCC 27325 / DSM 5911</strain>
    </source>
</reference>
<reference key="5">
    <citation type="journal article" date="2001" name="J. Bacteriol.">
        <title>Analysis of a complete library of putative drug transporter genes in Escherichia coli.</title>
        <authorList>
            <person name="Nishino K."/>
            <person name="Yamaguchi A."/>
        </authorList>
    </citation>
    <scope>FUNCTION</scope>
</reference>
<reference key="6">
    <citation type="journal article" date="2005" name="Science">
        <title>Global topology analysis of the Escherichia coli inner membrane proteome.</title>
        <authorList>
            <person name="Daley D.O."/>
            <person name="Rapp M."/>
            <person name="Granseth E."/>
            <person name="Melen K."/>
            <person name="Drew D."/>
            <person name="von Heijne G."/>
        </authorList>
    </citation>
    <scope>TOPOLOGY [LARGE SCALE ANALYSIS]</scope>
    <scope>SUBCELLULAR LOCATION</scope>
    <source>
        <strain>K12 / MG1655 / ATCC 47076</strain>
    </source>
</reference>
<reference key="7">
    <citation type="journal article" date="2012" name="Biochimie">
        <title>Functional and biochemical characterisation of the Escherichia coli major facilitator superfamily multidrug transporter MdtM.</title>
        <authorList>
            <person name="Holdsworth S.R."/>
            <person name="Law C.J."/>
        </authorList>
    </citation>
    <scope>FUNCTION</scope>
    <scope>TRANSPORTER ACTIVITY</scope>
    <scope>ACTIVITY REGULATION</scope>
    <scope>SUBUNIT</scope>
    <scope>SUBCELLULAR LOCATION</scope>
    <scope>DISRUPTION PHENOTYPE</scope>
    <scope>IDENTIFICATION BY MASS SPECTROMETRY</scope>
    <scope>MUTAGENESIS OF ASP-22 AND ARG-108</scope>
    <source>
        <strain>K12</strain>
    </source>
</reference>
<reference key="8">
    <citation type="journal article" date="2013" name="J. Antimicrob. Chemother.">
        <title>The major facilitator superfamily transporter MdtM contributes to the intrinsic resistance of Escherichia coli to quaternary ammonium compounds.</title>
        <authorList>
            <person name="Holdsworth S.R."/>
            <person name="Law C.J."/>
        </authorList>
    </citation>
    <scope>FUNCTION</scope>
    <scope>TRANSPORTER ACTIVITY</scope>
    <source>
        <strain>K12 / BW25113</strain>
    </source>
</reference>
<reference key="9">
    <citation type="journal article" date="2013" name="BMC Microbiol.">
        <title>Multidrug resistance protein MdtM adds to the repertoire of antiporters involved in alkaline pH homeostasis in Escherichia coli.</title>
        <authorList>
            <person name="Holdsworth S.R."/>
            <person name="Law C.J."/>
        </authorList>
    </citation>
    <scope>FUNCTION</scope>
    <scope>TRANSPORTER ACTIVITY</scope>
    <scope>ACTIVITY REGULATION</scope>
    <scope>BIOPHYSICOCHEMICAL PROPERTIES</scope>
    <scope>SUBCELLULAR LOCATION</scope>
    <scope>DISRUPTION PHENOTYPE</scope>
    <scope>MUTAGENESIS OF ASP-22</scope>
    <source>
        <strain>K12 / BW25113</strain>
    </source>
</reference>
<reference key="10">
    <citation type="journal article" date="2017" name="BMC Microbiol.">
        <authorList>
            <person name="Holdsworth S.R."/>
            <person name="Law C.J."/>
        </authorList>
    </citation>
    <scope>ERRATUM OF PUBMED:23701827</scope>
</reference>
<reference key="11">
    <citation type="journal article" date="2014" name="Mol. Microbiol.">
        <title>A single-component multidrug transporter of the major facilitator superfamily is part of a network that protects Escherichia coli from bile salt stress.</title>
        <authorList>
            <person name="Paul S."/>
            <person name="Alegre K.O."/>
            <person name="Holdsworth S.R."/>
            <person name="Rice M."/>
            <person name="Brown J.A."/>
            <person name="McVeigh P."/>
            <person name="Kelly S.M."/>
            <person name="Law C.J."/>
        </authorList>
    </citation>
    <scope>FUNCTION</scope>
    <scope>TRANSPORTER ACTIVITY</scope>
    <scope>ACTIVITY REGULATION</scope>
    <scope>DISRUPTION PHENOTYPE</scope>
    <scope>MUTAGENESIS OF ASP-22</scope>
    <source>
        <strain>K12 / BW25113</strain>
    </source>
</reference>
<reference key="12">
    <citation type="journal article" date="2015" name="Antibiotics">
        <title>Purification of a multidrug resistance transporter for crystallization studies.</title>
        <authorList>
            <person name="Alegre K.O."/>
            <person name="Law C.J."/>
        </authorList>
    </citation>
    <scope>SUBUNIT</scope>
    <scope>SUBCELLULAR LOCATION</scope>
    <scope>CRYSTALLIZATION</scope>
</reference>
<reference key="13">
    <citation type="journal article" date="2018" name="Res. Microbiol.">
        <title>Clamping down on drugs: the Escherichia coli multidrug efflux protein MdtM.</title>
        <authorList>
            <person name="Law C.J."/>
            <person name="Alegre K.O."/>
        </authorList>
    </citation>
    <scope>FUNCTION</scope>
    <scope>REVIEW</scope>
</reference>